<evidence type="ECO:0000255" key="1">
    <source>
        <dbReference type="HAMAP-Rule" id="MF_00236"/>
    </source>
</evidence>
<protein>
    <recommendedName>
        <fullName evidence="1">Sec-independent protein translocase protein TatA</fullName>
    </recommendedName>
</protein>
<name>TATA_LEPCP</name>
<feature type="chain" id="PRO_1000204438" description="Sec-independent protein translocase protein TatA">
    <location>
        <begin position="1"/>
        <end position="82"/>
    </location>
</feature>
<feature type="transmembrane region" description="Helical" evidence="1">
    <location>
        <begin position="1"/>
        <end position="21"/>
    </location>
</feature>
<proteinExistence type="inferred from homology"/>
<keyword id="KW-0997">Cell inner membrane</keyword>
<keyword id="KW-1003">Cell membrane</keyword>
<keyword id="KW-0472">Membrane</keyword>
<keyword id="KW-0653">Protein transport</keyword>
<keyword id="KW-1185">Reference proteome</keyword>
<keyword id="KW-0811">Translocation</keyword>
<keyword id="KW-0812">Transmembrane</keyword>
<keyword id="KW-1133">Transmembrane helix</keyword>
<keyword id="KW-0813">Transport</keyword>
<gene>
    <name evidence="1" type="primary">tatA</name>
    <name type="ordered locus">Lcho_1608</name>
</gene>
<comment type="function">
    <text evidence="1">Part of the twin-arginine translocation (Tat) system that transports large folded proteins containing a characteristic twin-arginine motif in their signal peptide across membranes. TatA could form the protein-conducting channel of the Tat system.</text>
</comment>
<comment type="subunit">
    <text evidence="1">The Tat system comprises two distinct complexes: a TatABC complex, containing multiple copies of TatA, TatB and TatC subunits, and a separate TatA complex, containing only TatA subunits. Substrates initially bind to the TatABC complex, which probably triggers association of the separate TatA complex to form the active translocon.</text>
</comment>
<comment type="subcellular location">
    <subcellularLocation>
        <location evidence="1">Cell inner membrane</location>
        <topology evidence="1">Single-pass membrane protein</topology>
    </subcellularLocation>
</comment>
<comment type="similarity">
    <text evidence="1">Belongs to the TatA/E family.</text>
</comment>
<dbReference type="EMBL" id="CP001013">
    <property type="protein sequence ID" value="ACB33875.1"/>
    <property type="molecule type" value="Genomic_DNA"/>
</dbReference>
<dbReference type="RefSeq" id="WP_012346636.1">
    <property type="nucleotide sequence ID" value="NC_010524.1"/>
</dbReference>
<dbReference type="SMR" id="B1XX94"/>
<dbReference type="STRING" id="395495.Lcho_1608"/>
<dbReference type="KEGG" id="lch:Lcho_1608"/>
<dbReference type="eggNOG" id="COG1826">
    <property type="taxonomic scope" value="Bacteria"/>
</dbReference>
<dbReference type="HOGENOM" id="CLU_086034_5_1_4"/>
<dbReference type="Proteomes" id="UP000001693">
    <property type="component" value="Chromosome"/>
</dbReference>
<dbReference type="GO" id="GO:0033281">
    <property type="term" value="C:TAT protein transport complex"/>
    <property type="evidence" value="ECO:0007669"/>
    <property type="project" value="UniProtKB-UniRule"/>
</dbReference>
<dbReference type="GO" id="GO:0008320">
    <property type="term" value="F:protein transmembrane transporter activity"/>
    <property type="evidence" value="ECO:0007669"/>
    <property type="project" value="UniProtKB-UniRule"/>
</dbReference>
<dbReference type="GO" id="GO:0043953">
    <property type="term" value="P:protein transport by the Tat complex"/>
    <property type="evidence" value="ECO:0007669"/>
    <property type="project" value="UniProtKB-UniRule"/>
</dbReference>
<dbReference type="Gene3D" id="1.20.5.3310">
    <property type="match status" value="1"/>
</dbReference>
<dbReference type="HAMAP" id="MF_00236">
    <property type="entry name" value="TatA_E"/>
    <property type="match status" value="1"/>
</dbReference>
<dbReference type="InterPro" id="IPR003369">
    <property type="entry name" value="TatA/B/E"/>
</dbReference>
<dbReference type="InterPro" id="IPR006312">
    <property type="entry name" value="TatA/E"/>
</dbReference>
<dbReference type="NCBIfam" id="NF002813">
    <property type="entry name" value="PRK02958.1"/>
    <property type="match status" value="1"/>
</dbReference>
<dbReference type="NCBIfam" id="TIGR01411">
    <property type="entry name" value="tatAE"/>
    <property type="match status" value="1"/>
</dbReference>
<dbReference type="PANTHER" id="PTHR42982">
    <property type="entry name" value="SEC-INDEPENDENT PROTEIN TRANSLOCASE PROTEIN TATA"/>
    <property type="match status" value="1"/>
</dbReference>
<dbReference type="PANTHER" id="PTHR42982:SF1">
    <property type="entry name" value="SEC-INDEPENDENT PROTEIN TRANSLOCASE PROTEIN TATA"/>
    <property type="match status" value="1"/>
</dbReference>
<dbReference type="Pfam" id="PF02416">
    <property type="entry name" value="TatA_B_E"/>
    <property type="match status" value="1"/>
</dbReference>
<sequence>MGLSTTHLIIFLVIIVLIFGTKKLKNIGSDLGGAVKGFKDGMKTGEKTEADAAAAKAAEPAAQVSAEKRIDTQTIDVEAKTK</sequence>
<organism>
    <name type="scientific">Leptothrix cholodnii (strain ATCC 51168 / LMG 8142 / SP-6)</name>
    <name type="common">Leptothrix discophora (strain SP-6)</name>
    <dbReference type="NCBI Taxonomy" id="395495"/>
    <lineage>
        <taxon>Bacteria</taxon>
        <taxon>Pseudomonadati</taxon>
        <taxon>Pseudomonadota</taxon>
        <taxon>Betaproteobacteria</taxon>
        <taxon>Burkholderiales</taxon>
        <taxon>Sphaerotilaceae</taxon>
        <taxon>Leptothrix</taxon>
    </lineage>
</organism>
<reference key="1">
    <citation type="submission" date="2008-03" db="EMBL/GenBank/DDBJ databases">
        <title>Complete sequence of Leptothrix cholodnii SP-6.</title>
        <authorList>
            <consortium name="US DOE Joint Genome Institute"/>
            <person name="Copeland A."/>
            <person name="Lucas S."/>
            <person name="Lapidus A."/>
            <person name="Glavina del Rio T."/>
            <person name="Dalin E."/>
            <person name="Tice H."/>
            <person name="Bruce D."/>
            <person name="Goodwin L."/>
            <person name="Pitluck S."/>
            <person name="Chertkov O."/>
            <person name="Brettin T."/>
            <person name="Detter J.C."/>
            <person name="Han C."/>
            <person name="Kuske C.R."/>
            <person name="Schmutz J."/>
            <person name="Larimer F."/>
            <person name="Land M."/>
            <person name="Hauser L."/>
            <person name="Kyrpides N."/>
            <person name="Lykidis A."/>
            <person name="Emerson D."/>
            <person name="Richardson P."/>
        </authorList>
    </citation>
    <scope>NUCLEOTIDE SEQUENCE [LARGE SCALE GENOMIC DNA]</scope>
    <source>
        <strain>ATCC 51168 / LMG 8142 / SP-6</strain>
    </source>
</reference>
<accession>B1XX94</accession>